<dbReference type="EC" id="2.7.1.12" evidence="2"/>
<dbReference type="EMBL" id="CP000009">
    <property type="protein sequence ID" value="AAW61449.1"/>
    <property type="molecule type" value="Genomic_DNA"/>
</dbReference>
<dbReference type="RefSeq" id="WP_011253231.1">
    <property type="nucleotide sequence ID" value="NC_006677.1"/>
</dbReference>
<dbReference type="SMR" id="Q5FQ97"/>
<dbReference type="STRING" id="290633.GOX1709"/>
<dbReference type="KEGG" id="gox:GOX1709"/>
<dbReference type="eggNOG" id="COG3265">
    <property type="taxonomic scope" value="Bacteria"/>
</dbReference>
<dbReference type="HOGENOM" id="CLU_077168_4_1_5"/>
<dbReference type="UniPathway" id="UPA00792"/>
<dbReference type="Proteomes" id="UP000006375">
    <property type="component" value="Chromosome"/>
</dbReference>
<dbReference type="GO" id="GO:0005737">
    <property type="term" value="C:cytoplasm"/>
    <property type="evidence" value="ECO:0007669"/>
    <property type="project" value="TreeGrafter"/>
</dbReference>
<dbReference type="GO" id="GO:0005524">
    <property type="term" value="F:ATP binding"/>
    <property type="evidence" value="ECO:0007669"/>
    <property type="project" value="UniProtKB-KW"/>
</dbReference>
<dbReference type="GO" id="GO:0046316">
    <property type="term" value="F:gluconokinase activity"/>
    <property type="evidence" value="ECO:0007669"/>
    <property type="project" value="UniProtKB-EC"/>
</dbReference>
<dbReference type="GO" id="GO:0019521">
    <property type="term" value="P:D-gluconate metabolic process"/>
    <property type="evidence" value="ECO:0007669"/>
    <property type="project" value="UniProtKB-KW"/>
</dbReference>
<dbReference type="CDD" id="cd02021">
    <property type="entry name" value="GntK"/>
    <property type="match status" value="1"/>
</dbReference>
<dbReference type="FunFam" id="3.40.50.300:FF:000522">
    <property type="entry name" value="Gluconokinase"/>
    <property type="match status" value="1"/>
</dbReference>
<dbReference type="Gene3D" id="3.40.50.300">
    <property type="entry name" value="P-loop containing nucleotide triphosphate hydrolases"/>
    <property type="match status" value="1"/>
</dbReference>
<dbReference type="InterPro" id="IPR027417">
    <property type="entry name" value="P-loop_NTPase"/>
</dbReference>
<dbReference type="InterPro" id="IPR006001">
    <property type="entry name" value="Therm_gnt_kin"/>
</dbReference>
<dbReference type="NCBIfam" id="TIGR01313">
    <property type="entry name" value="therm_gnt_kin"/>
    <property type="match status" value="1"/>
</dbReference>
<dbReference type="PANTHER" id="PTHR43442">
    <property type="entry name" value="GLUCONOKINASE-RELATED"/>
    <property type="match status" value="1"/>
</dbReference>
<dbReference type="PANTHER" id="PTHR43442:SF3">
    <property type="entry name" value="GLUCONOKINASE-RELATED"/>
    <property type="match status" value="1"/>
</dbReference>
<dbReference type="Pfam" id="PF13671">
    <property type="entry name" value="AAA_33"/>
    <property type="match status" value="1"/>
</dbReference>
<dbReference type="SUPFAM" id="SSF52540">
    <property type="entry name" value="P-loop containing nucleoside triphosphate hydrolases"/>
    <property type="match status" value="1"/>
</dbReference>
<keyword id="KW-0067">ATP-binding</keyword>
<keyword id="KW-0311">Gluconate utilization</keyword>
<keyword id="KW-0418">Kinase</keyword>
<keyword id="KW-0547">Nucleotide-binding</keyword>
<keyword id="KW-1185">Reference proteome</keyword>
<keyword id="KW-0808">Transferase</keyword>
<reference key="1">
    <citation type="journal article" date="2005" name="Nat. Biotechnol.">
        <title>Complete genome sequence of the acetic acid bacterium Gluconobacter oxydans.</title>
        <authorList>
            <person name="Prust C."/>
            <person name="Hoffmeister M."/>
            <person name="Liesegang H."/>
            <person name="Wiezer A."/>
            <person name="Fricke W.F."/>
            <person name="Ehrenreich A."/>
            <person name="Gottschalk G."/>
            <person name="Deppenmeier U."/>
        </authorList>
    </citation>
    <scope>NUCLEOTIDE SEQUENCE [LARGE SCALE GENOMIC DNA]</scope>
    <source>
        <strain>621H</strain>
    </source>
</reference>
<reference key="2">
    <citation type="journal article" date="2010" name="Appl. Microbiol. Biotechnol.">
        <title>Characterization of enzymes involved in the central metabolism of Gluconobacter oxydans.</title>
        <authorList>
            <person name="Rauch B."/>
            <person name="Pahlke J."/>
            <person name="Schweiger P."/>
            <person name="Deppenmeier U."/>
        </authorList>
    </citation>
    <scope>FUNCTION</scope>
    <scope>CATALYTIC ACTIVITY</scope>
    <scope>ACTIVITY REGULATION</scope>
    <scope>BIOPHYSICOCHEMICAL PROPERTIES</scope>
    <scope>PATHWAY</scope>
    <scope>SUBUNIT</scope>
    <source>
        <strain>621H</strain>
    </source>
</reference>
<organism>
    <name type="scientific">Gluconobacter oxydans (strain 621H)</name>
    <name type="common">Gluconobacter suboxydans</name>
    <dbReference type="NCBI Taxonomy" id="290633"/>
    <lineage>
        <taxon>Bacteria</taxon>
        <taxon>Pseudomonadati</taxon>
        <taxon>Pseudomonadota</taxon>
        <taxon>Alphaproteobacteria</taxon>
        <taxon>Acetobacterales</taxon>
        <taxon>Acetobacteraceae</taxon>
        <taxon>Gluconobacter</taxon>
    </lineage>
</organism>
<name>GCNK_GLUOX</name>
<protein>
    <recommendedName>
        <fullName evidence="3">Gluconokinase</fullName>
        <ecNumber evidence="2">2.7.1.12</ecNumber>
    </recommendedName>
    <alternativeName>
        <fullName evidence="4">Gluconate kinase</fullName>
    </alternativeName>
</protein>
<evidence type="ECO:0000255" key="1"/>
<evidence type="ECO:0000269" key="2">
    <source>
    </source>
</evidence>
<evidence type="ECO:0000303" key="3">
    <source>
    </source>
</evidence>
<evidence type="ECO:0000305" key="4"/>
<evidence type="ECO:0000312" key="5">
    <source>
        <dbReference type="EMBL" id="AAW61449.1"/>
    </source>
</evidence>
<comment type="function">
    <text evidence="2">Phosphorylates gluconate to 6-phosphogluconate.</text>
</comment>
<comment type="catalytic activity">
    <reaction evidence="2">
        <text>D-gluconate + ATP = 6-phospho-D-gluconate + ADP + H(+)</text>
        <dbReference type="Rhea" id="RHEA:19433"/>
        <dbReference type="ChEBI" id="CHEBI:15378"/>
        <dbReference type="ChEBI" id="CHEBI:18391"/>
        <dbReference type="ChEBI" id="CHEBI:30616"/>
        <dbReference type="ChEBI" id="CHEBI:58759"/>
        <dbReference type="ChEBI" id="CHEBI:456216"/>
        <dbReference type="EC" id="2.7.1.12"/>
    </reaction>
</comment>
<comment type="activity regulation">
    <text evidence="2">Activated by magnesium.</text>
</comment>
<comment type="biophysicochemical properties">
    <kinetics>
        <KM evidence="2">0.56 mM for gluconate</KM>
        <KM evidence="2">67 uM for ATP</KM>
        <Vmax evidence="2">30.0 umol/min/mg enzyme</Vmax>
        <text evidence="2">kcat is 9.8 sec(-1).</text>
    </kinetics>
</comment>
<comment type="pathway">
    <text evidence="2">Carbohydrate acid metabolism; D-gluconate degradation.</text>
</comment>
<comment type="subunit">
    <text evidence="2">Monomer.</text>
</comment>
<comment type="similarity">
    <text evidence="4">Belongs to the gluconokinase GntK/GntV family.</text>
</comment>
<feature type="chain" id="PRO_0000434477" description="Gluconokinase">
    <location>
        <begin position="1"/>
        <end position="178"/>
    </location>
</feature>
<feature type="binding site" evidence="1">
    <location>
        <begin position="19"/>
        <end position="26"/>
    </location>
    <ligand>
        <name>ATP</name>
        <dbReference type="ChEBI" id="CHEBI:30616"/>
    </ligand>
</feature>
<sequence length="178" mass="19720">MTEHETQMGLKPRFLVVMGVSGTGKTTVATGLATRLGWHFQEGDALHPPANVEKMSTGQPLTDADRAPWLALCHDWLREQVKAGHGAVLTCSALKRSYREQLRGDDLPIEFVHIDTSTGELADRLQRREGHFMPASLLPSQLATLEVPGDDEPVIRVSGEKHPDVVLEELIRHFQAED</sequence>
<gene>
    <name evidence="5" type="ordered locus">GOX1709</name>
</gene>
<accession>Q5FQ97</accession>
<proteinExistence type="evidence at protein level"/>